<reference key="1">
    <citation type="journal article" date="2019" name="Toxins">
        <title>The dual prey-inactivation strategy of spiders-in-depth venomic analysis of Cupiennius salei.</title>
        <authorList>
            <person name="Kuhn-Nentwig L."/>
            <person name="Langenegger N."/>
            <person name="Heller M."/>
            <person name="Koua D."/>
            <person name="Nentwig W."/>
        </authorList>
    </citation>
    <scope>NUCLEOTIDE SEQUENCE [MRNA]</scope>
    <source>
        <tissue>Venom gland</tissue>
    </source>
</reference>
<reference key="2">
    <citation type="journal article" date="2004" name="Proc. Natl. Acad. Sci. U.S.A.">
        <title>CSTX-13, a highly synergistically acting two-chain neurotoxic enhancer in the venom of the spider Cupiennius salei (Ctenidae).</title>
        <authorList>
            <person name="Wullschleger B."/>
            <person name="Kuhn-Nentwig L."/>
            <person name="Tromp J."/>
            <person name="Kaempfer U."/>
            <person name="Schaller J."/>
            <person name="Schuerch S."/>
            <person name="Nentwig W."/>
        </authorList>
    </citation>
    <scope>PROTEIN SEQUENCE OF 48-81 AND 88-116</scope>
    <scope>FUNCTION</scope>
    <scope>SUBUNIT</scope>
    <scope>SUBCELLULAR LOCATION</scope>
    <scope>MASS SPECTROMETRY</scope>
    <scope>TOXIC DOSE</scope>
    <scope>DISULFIDE BONDS</scope>
    <source>
        <tissue>Venom</tissue>
    </source>
</reference>
<reference key="3">
    <citation type="journal article" date="2005" name="J. Exp. Biol.">
        <title>Spider venom: enhancement of venom efficacy mediated by different synergistic strategies in Cupiennius salei.</title>
        <authorList>
            <person name="Wullschleger B."/>
            <person name="Nentwig W."/>
            <person name="Kuhn-Nentwig L."/>
        </authorList>
    </citation>
    <scope>FUNCTION</scope>
</reference>
<reference key="4">
    <citation type="journal article" date="2020" name="Toxins">
        <title>Neurotoxin merging: a strategy deployed by the venom of the spider cupiennius salei to potentiate toxicity on insects.</title>
        <authorList>
            <person name="Clemencon B."/>
            <person name="Kuhn-Nentwig L."/>
            <person name="Langenegger N."/>
            <person name="Kopp L."/>
            <person name="Peigneur S."/>
            <person name="Tytgat J."/>
            <person name="Nentwig W."/>
            <person name="Luescher B.P."/>
        </authorList>
    </citation>
    <scope>FUNCTION</scope>
    <scope>TOXIC DOSE</scope>
    <scope>SUBUNIT</scope>
    <scope>3D-STRUCTURE MODELING</scope>
    <scope>PROBABLE AMIDATION AT THR-116</scope>
    <source>
        <tissue>Venom</tissue>
    </source>
</reference>
<keyword id="KW-0027">Amidation</keyword>
<keyword id="KW-0204">Cytolysis</keyword>
<keyword id="KW-0903">Direct protein sequencing</keyword>
<keyword id="KW-1015">Disulfide bond</keyword>
<keyword id="KW-0472">Membrane</keyword>
<keyword id="KW-0528">Neurotoxin</keyword>
<keyword id="KW-0964">Secreted</keyword>
<keyword id="KW-0732">Signal</keyword>
<keyword id="KW-1052">Target cell membrane</keyword>
<keyword id="KW-1053">Target membrane</keyword>
<keyword id="KW-0800">Toxin</keyword>
<name>TXC13_CUPSA</name>
<sequence length="117" mass="13404">MKVLVIFAVLSLVIFSNCSAETDEDFFGEESFEADDIIPFIAKEQVRSDCTLRNHDCTDDRHSCCRSKMFKDVCTCFYPSQRSETARAKKELCTCQQPKHLKYIEKGLQKAKDYATG</sequence>
<evidence type="ECO:0000255" key="1"/>
<evidence type="ECO:0000269" key="2">
    <source>
    </source>
</evidence>
<evidence type="ECO:0000269" key="3">
    <source>
    </source>
</evidence>
<evidence type="ECO:0000269" key="4">
    <source>
    </source>
</evidence>
<evidence type="ECO:0000303" key="5">
    <source>
    </source>
</evidence>
<evidence type="ECO:0000303" key="6">
    <source>
    </source>
</evidence>
<evidence type="ECO:0000305" key="7"/>
<evidence type="ECO:0000305" key="8">
    <source>
    </source>
</evidence>
<evidence type="ECO:0000305" key="9">
    <source>
    </source>
</evidence>
<protein>
    <recommendedName>
        <fullName evidence="5 6">Neurotoxic enhancer CSTX-13</fullName>
    </recommendedName>
    <alternativeName>
        <fullName evidence="7">U2-ctenitoxin-Cs1a</fullName>
        <shortName evidence="7">U2-CNTX-Cs1a</shortName>
    </alternativeName>
    <component>
        <recommendedName>
            <fullName>CSTX-13 A chain</fullName>
        </recommendedName>
        <alternativeName>
            <fullName>U2-ctenitoxin-Cs1a A chain</fullName>
            <shortName>U2-CNTX-Cs1a A chain</shortName>
        </alternativeName>
    </component>
    <component>
        <recommendedName>
            <fullName>CSTX-13 B chain</fullName>
        </recommendedName>
        <alternativeName>
            <fullName>U2-ctenitoxin-Cs1a B chain</fullName>
            <shortName>U2-CNTX-Cs1a B chain</shortName>
        </alternativeName>
    </component>
</protein>
<organism>
    <name type="scientific">Cupiennius salei</name>
    <name type="common">American wandering spider</name>
    <dbReference type="NCBI Taxonomy" id="6928"/>
    <lineage>
        <taxon>Eukaryota</taxon>
        <taxon>Metazoa</taxon>
        <taxon>Ecdysozoa</taxon>
        <taxon>Arthropoda</taxon>
        <taxon>Chelicerata</taxon>
        <taxon>Arachnida</taxon>
        <taxon>Araneae</taxon>
        <taxon>Araneomorphae</taxon>
        <taxon>Entelegynae</taxon>
        <taxon>Lycosoidea</taxon>
        <taxon>Ctenidae</taxon>
        <taxon>Cupiennius</taxon>
    </lineage>
</organism>
<proteinExistence type="evidence at protein level"/>
<feature type="signal peptide" evidence="1">
    <location>
        <begin position="1"/>
        <end position="20"/>
    </location>
</feature>
<feature type="propeptide" id="PRO_0000452334" evidence="8">
    <location>
        <begin position="21"/>
        <end position="47"/>
    </location>
</feature>
<feature type="peptide" id="PRO_0000045011" description="CSTX-13 A chain" evidence="2">
    <location>
        <begin position="48"/>
        <end position="81"/>
    </location>
</feature>
<feature type="propeptide" id="PRO_0000452335" evidence="8">
    <location>
        <begin position="82"/>
        <end position="87"/>
    </location>
</feature>
<feature type="peptide" id="PRO_0000044560" description="CSTX-13 B chain" evidence="2">
    <location>
        <begin position="88"/>
        <end position="116"/>
    </location>
</feature>
<feature type="modified residue" description="Threonine amide" evidence="9">
    <location>
        <position position="116"/>
    </location>
</feature>
<feature type="disulfide bond" evidence="2">
    <location>
        <begin position="50"/>
        <end position="65"/>
    </location>
</feature>
<feature type="disulfide bond" evidence="2">
    <location>
        <begin position="57"/>
        <end position="74"/>
    </location>
</feature>
<feature type="disulfide bond" description="Interchain (between A and B chains)" evidence="2">
    <location>
        <begin position="64"/>
        <end position="95"/>
    </location>
</feature>
<feature type="disulfide bond" description="Interchain (between A and B chains)" evidence="2">
    <location>
        <begin position="76"/>
        <end position="93"/>
    </location>
</feature>
<dbReference type="EMBL" id="MH754552">
    <property type="protein sequence ID" value="QDC23087.1"/>
    <property type="molecule type" value="mRNA"/>
</dbReference>
<dbReference type="SMR" id="P83919"/>
<dbReference type="ArachnoServer" id="AS000210">
    <property type="toxin name" value="U2-ctenitoxin-Cs1a"/>
</dbReference>
<dbReference type="GO" id="GO:0005576">
    <property type="term" value="C:extracellular region"/>
    <property type="evidence" value="ECO:0007669"/>
    <property type="project" value="UniProtKB-SubCell"/>
</dbReference>
<dbReference type="GO" id="GO:0016020">
    <property type="term" value="C:membrane"/>
    <property type="evidence" value="ECO:0007669"/>
    <property type="project" value="UniProtKB-KW"/>
</dbReference>
<dbReference type="GO" id="GO:0044218">
    <property type="term" value="C:other organism cell membrane"/>
    <property type="evidence" value="ECO:0007669"/>
    <property type="project" value="UniProtKB-KW"/>
</dbReference>
<dbReference type="GO" id="GO:0090729">
    <property type="term" value="F:toxin activity"/>
    <property type="evidence" value="ECO:0007669"/>
    <property type="project" value="UniProtKB-KW"/>
</dbReference>
<dbReference type="GO" id="GO:0031640">
    <property type="term" value="P:killing of cells of another organism"/>
    <property type="evidence" value="ECO:0007669"/>
    <property type="project" value="UniProtKB-KW"/>
</dbReference>
<dbReference type="InterPro" id="IPR019553">
    <property type="entry name" value="Spider_toxin_CSTX_knottin"/>
</dbReference>
<dbReference type="InterPro" id="IPR011142">
    <property type="entry name" value="Spider_toxin_CSTX_Knottin_CS"/>
</dbReference>
<dbReference type="Pfam" id="PF10530">
    <property type="entry name" value="Toxin_35"/>
    <property type="match status" value="1"/>
</dbReference>
<dbReference type="PROSITE" id="PS60029">
    <property type="entry name" value="SPIDER_CSTX"/>
    <property type="match status" value="1"/>
</dbReference>
<accession>P83919</accession>
<accession>A0A4Y5UGH7</accession>
<accession>P83920</accession>
<comment type="function">
    <text evidence="2 3">Synergistic toxin that induces or increases a cytolytic effect when combined with CSTX-1 (AC P81694) or CSTX-9 (AC P58604). When alone, has a weak insecticidal activity, with an unknown molecular target.</text>
</comment>
<comment type="subunit">
    <text evidence="2 4">Heterodimer of A and B chains; disulfide-linked (PubMed:15272079). Interacts with CSTX-1 (AC P81694) (Kd=430 nM), and with CSTX-9 (AC P58604) (Kd=370 nM) (PubMed:32290562).</text>
</comment>
<comment type="subcellular location">
    <subcellularLocation>
        <location evidence="2">Secreted</location>
    </subcellularLocation>
    <subcellularLocation>
        <location evidence="9">Target cell membrane</location>
    </subcellularLocation>
</comment>
<comment type="tissue specificity">
    <text evidence="8">Expressed by the venom gland.</text>
</comment>
<comment type="domain">
    <text evidence="8">The presence of a 'disulfide through disulfide knot' structurally defines this protein as a knottin.</text>
</comment>
<comment type="mass spectrometry" mass="4342.73" method="Electrospray" evidence="2">
    <molecule>CSTX-13 A chain</molecule>
</comment>
<comment type="mass spectrometry" mass="3475.8" method="Electrospray" evidence="2">
    <molecule>CSTX-13 B chain</molecule>
</comment>
<comment type="toxic dose">
    <text evidence="2">LD(50) is 16.3 pmol/mg in Drosophila.</text>
</comment>
<comment type="toxic dose">
    <text evidence="4">LD(50) is 111.2 pmol/mg when intrathoracically injected into drosophila.</text>
</comment>
<comment type="toxic dose">
    <text evidence="4">LD(50) is 0.075 pmol/mg when intrathoracically co-injected with CSTX-1 (AC P81694) into drosophila.</text>
</comment>
<comment type="toxic dose">
    <text evidence="4">LD(50) is 0.082 pmol/mg when intrathoracically co-injected with CSTX-9 (AC P58604) into drosophila.</text>
</comment>
<comment type="miscellaneous">
    <text evidence="4">Negative results: does not show effect on 18 ion channels: Kv1.1, Kv1.2, Kv1.3, Kv1.4, Kv1.5, Kv1.6, Kv2.1, Kv3.1, Kv4.2, Kv4.3, Shaker IR, hERG, Nav1.2, Nav1.4, Nav1.5, Nav1.6, DmNaV1, and Cav3.3 (when tested at 500 nM on channels expressed in oocytes).</text>
</comment>
<comment type="similarity">
    <text evidence="7">Belongs to the neurotoxin 19 (CSTX) family. 12 subfamily.</text>
</comment>